<dbReference type="EC" id="6.2.1.45" evidence="2"/>
<dbReference type="EMBL" id="CM000310">
    <property type="protein sequence ID" value="EEQ44684.1"/>
    <property type="molecule type" value="Genomic_DNA"/>
</dbReference>
<dbReference type="EMBL" id="U13193">
    <property type="protein sequence ID" value="AAC49911.1"/>
    <property type="molecule type" value="Genomic_DNA"/>
</dbReference>
<dbReference type="PIR" id="T18215">
    <property type="entry name" value="T18215"/>
</dbReference>
<dbReference type="SMR" id="P52495"/>
<dbReference type="PaxDb" id="5476-P52495"/>
<dbReference type="VEuPathDB" id="FungiDB:CAWG_02960"/>
<dbReference type="HOGENOM" id="CLU_002556_0_0_1"/>
<dbReference type="OMA" id="GANLHAF"/>
<dbReference type="OrthoDB" id="11319at766764"/>
<dbReference type="UniPathway" id="UPA00143"/>
<dbReference type="Proteomes" id="UP000001429">
    <property type="component" value="Chromosome 3"/>
</dbReference>
<dbReference type="GO" id="GO:0005737">
    <property type="term" value="C:cytoplasm"/>
    <property type="evidence" value="ECO:0007669"/>
    <property type="project" value="UniProtKB-SubCell"/>
</dbReference>
<dbReference type="GO" id="GO:0005634">
    <property type="term" value="C:nucleus"/>
    <property type="evidence" value="ECO:0007669"/>
    <property type="project" value="UniProtKB-SubCell"/>
</dbReference>
<dbReference type="GO" id="GO:0005524">
    <property type="term" value="F:ATP binding"/>
    <property type="evidence" value="ECO:0007669"/>
    <property type="project" value="UniProtKB-KW"/>
</dbReference>
<dbReference type="GO" id="GO:0004839">
    <property type="term" value="F:ubiquitin activating enzyme activity"/>
    <property type="evidence" value="ECO:0007669"/>
    <property type="project" value="UniProtKB-EC"/>
</dbReference>
<dbReference type="GO" id="GO:0006974">
    <property type="term" value="P:DNA damage response"/>
    <property type="evidence" value="ECO:0007669"/>
    <property type="project" value="TreeGrafter"/>
</dbReference>
<dbReference type="GO" id="GO:0006511">
    <property type="term" value="P:ubiquitin-dependent protein catabolic process"/>
    <property type="evidence" value="ECO:0007669"/>
    <property type="project" value="TreeGrafter"/>
</dbReference>
<dbReference type="CDD" id="cd01491">
    <property type="entry name" value="Ube1_repeat1"/>
    <property type="match status" value="1"/>
</dbReference>
<dbReference type="CDD" id="cd01490">
    <property type="entry name" value="Ube1_repeat2"/>
    <property type="match status" value="1"/>
</dbReference>
<dbReference type="FunFam" id="1.10.10.2660:FF:000001">
    <property type="entry name" value="Ubiquitin-activating enzyme E1 1"/>
    <property type="match status" value="1"/>
</dbReference>
<dbReference type="FunFam" id="3.40.50.12550:FF:000001">
    <property type="entry name" value="Ubiquitin-activating enzyme E1 1"/>
    <property type="match status" value="1"/>
</dbReference>
<dbReference type="FunFam" id="3.40.50.720:FF:000015">
    <property type="entry name" value="Ubiquitin-activating enzyme E1 1"/>
    <property type="match status" value="1"/>
</dbReference>
<dbReference type="FunFam" id="3.10.290.60:FF:000002">
    <property type="entry name" value="Ubiquitin-like modifier-activating enzyme 1"/>
    <property type="match status" value="1"/>
</dbReference>
<dbReference type="FunFam" id="2.40.30.180:FF:000001">
    <property type="entry name" value="ubiquitin-like modifier-activating enzyme 1"/>
    <property type="match status" value="1"/>
</dbReference>
<dbReference type="FunFam" id="3.50.50.80:FF:000001">
    <property type="entry name" value="ubiquitin-like modifier-activating enzyme 1"/>
    <property type="match status" value="1"/>
</dbReference>
<dbReference type="Gene3D" id="3.40.50.720">
    <property type="entry name" value="NAD(P)-binding Rossmann-like Domain"/>
    <property type="match status" value="1"/>
</dbReference>
<dbReference type="Gene3D" id="2.40.30.180">
    <property type="entry name" value="Ubiquitin-activating enzyme E1, FCCH domain"/>
    <property type="match status" value="1"/>
</dbReference>
<dbReference type="Gene3D" id="3.50.50.80">
    <property type="entry name" value="Ubiquitin-activating enzyme E1, inactive adenylation domain, subdomain 1"/>
    <property type="match status" value="1"/>
</dbReference>
<dbReference type="Gene3D" id="3.40.50.12550">
    <property type="entry name" value="Ubiquitin-activating enzyme E1, inactive adenylation domain, subdomain 2"/>
    <property type="match status" value="1"/>
</dbReference>
<dbReference type="Gene3D" id="1.10.10.2660">
    <property type="entry name" value="Ubiquitin-activating enzyme E1, SCCH domain"/>
    <property type="match status" value="1"/>
</dbReference>
<dbReference type="Gene3D" id="3.10.290.60">
    <property type="entry name" value="Ubiquitin-activating enzyme E1, UFD domain"/>
    <property type="match status" value="1"/>
</dbReference>
<dbReference type="InterPro" id="IPR032420">
    <property type="entry name" value="E1_4HB"/>
</dbReference>
<dbReference type="InterPro" id="IPR032418">
    <property type="entry name" value="E1_FCCH"/>
</dbReference>
<dbReference type="InterPro" id="IPR042302">
    <property type="entry name" value="E1_FCCH_sf"/>
</dbReference>
<dbReference type="InterPro" id="IPR045886">
    <property type="entry name" value="ThiF/MoeB/HesA"/>
</dbReference>
<dbReference type="InterPro" id="IPR000594">
    <property type="entry name" value="ThiF_NAD_FAD-bd"/>
</dbReference>
<dbReference type="InterPro" id="IPR018965">
    <property type="entry name" value="Ub-activating_enz_E1_C"/>
</dbReference>
<dbReference type="InterPro" id="IPR042449">
    <property type="entry name" value="Ub-E1_IAD_1"/>
</dbReference>
<dbReference type="InterPro" id="IPR038252">
    <property type="entry name" value="UBA_E1_C_sf"/>
</dbReference>
<dbReference type="InterPro" id="IPR019572">
    <property type="entry name" value="UBA_E1_SCCH"/>
</dbReference>
<dbReference type="InterPro" id="IPR042063">
    <property type="entry name" value="Ubi_acti_E1_SCCH"/>
</dbReference>
<dbReference type="InterPro" id="IPR035985">
    <property type="entry name" value="Ubiquitin-activating_enz"/>
</dbReference>
<dbReference type="InterPro" id="IPR018075">
    <property type="entry name" value="UBQ-activ_enz_E1"/>
</dbReference>
<dbReference type="InterPro" id="IPR033127">
    <property type="entry name" value="UBQ-activ_enz_E1_Cys_AS"/>
</dbReference>
<dbReference type="InterPro" id="IPR000011">
    <property type="entry name" value="UBQ/SUMO-activ_enz_E1-like"/>
</dbReference>
<dbReference type="NCBIfam" id="TIGR01408">
    <property type="entry name" value="Ube1"/>
    <property type="match status" value="1"/>
</dbReference>
<dbReference type="PANTHER" id="PTHR10953">
    <property type="entry name" value="UBIQUITIN-ACTIVATING ENZYME E1"/>
    <property type="match status" value="1"/>
</dbReference>
<dbReference type="PANTHER" id="PTHR10953:SF4">
    <property type="entry name" value="UBIQUITIN-ACTIVATING ENZYME E1 C-TERMINAL DOMAIN-CONTAINING PROTEIN"/>
    <property type="match status" value="1"/>
</dbReference>
<dbReference type="Pfam" id="PF16191">
    <property type="entry name" value="E1_4HB"/>
    <property type="match status" value="1"/>
</dbReference>
<dbReference type="Pfam" id="PF16190">
    <property type="entry name" value="E1_FCCH"/>
    <property type="match status" value="1"/>
</dbReference>
<dbReference type="Pfam" id="PF09358">
    <property type="entry name" value="E1_UFD"/>
    <property type="match status" value="1"/>
</dbReference>
<dbReference type="Pfam" id="PF00899">
    <property type="entry name" value="ThiF"/>
    <property type="match status" value="2"/>
</dbReference>
<dbReference type="Pfam" id="PF10585">
    <property type="entry name" value="UBA_E1_SCCH"/>
    <property type="match status" value="1"/>
</dbReference>
<dbReference type="PRINTS" id="PR01849">
    <property type="entry name" value="UBIQUITINACT"/>
</dbReference>
<dbReference type="SMART" id="SM00985">
    <property type="entry name" value="UBA_e1_C"/>
    <property type="match status" value="1"/>
</dbReference>
<dbReference type="SUPFAM" id="SSF69572">
    <property type="entry name" value="Activating enzymes of the ubiquitin-like proteins"/>
    <property type="match status" value="2"/>
</dbReference>
<dbReference type="PROSITE" id="PS00865">
    <property type="entry name" value="UBIQUITIN_ACTIVAT_2"/>
    <property type="match status" value="1"/>
</dbReference>
<feature type="chain" id="PRO_0000194978" description="Ubiquitin-activating enzyme E1 1">
    <location>
        <begin position="1"/>
        <end position="1021"/>
    </location>
</feature>
<feature type="active site" description="Glycyl thioester intermediate" evidence="3">
    <location>
        <position position="598"/>
    </location>
</feature>
<feature type="binding site" evidence="1">
    <location>
        <position position="22"/>
    </location>
    <ligand>
        <name>ATP</name>
        <dbReference type="ChEBI" id="CHEBI:30616"/>
    </ligand>
</feature>
<feature type="binding site" evidence="2">
    <location>
        <position position="442"/>
    </location>
    <ligand>
        <name>ATP</name>
        <dbReference type="ChEBI" id="CHEBI:30616"/>
    </ligand>
</feature>
<feature type="binding site" evidence="2">
    <location>
        <position position="468"/>
    </location>
    <ligand>
        <name>ATP</name>
        <dbReference type="ChEBI" id="CHEBI:30616"/>
    </ligand>
</feature>
<feature type="binding site" evidence="1">
    <location>
        <position position="470"/>
    </location>
    <ligand>
        <name>Mg(2+)</name>
        <dbReference type="ChEBI" id="CHEBI:18420"/>
        <label>1</label>
    </ligand>
</feature>
<feature type="binding site" evidence="2">
    <location>
        <position position="479"/>
    </location>
    <ligand>
        <name>ATP</name>
        <dbReference type="ChEBI" id="CHEBI:30616"/>
    </ligand>
</feature>
<feature type="binding site" evidence="2">
    <location>
        <position position="492"/>
    </location>
    <ligand>
        <name>ATP</name>
        <dbReference type="ChEBI" id="CHEBI:30616"/>
    </ligand>
</feature>
<feature type="binding site" evidence="1">
    <location>
        <position position="518"/>
    </location>
    <ligand>
        <name>ATP</name>
        <dbReference type="ChEBI" id="CHEBI:30616"/>
    </ligand>
</feature>
<feature type="binding site" evidence="2">
    <location>
        <begin position="542"/>
        <end position="543"/>
    </location>
    <ligand>
        <name>ATP</name>
        <dbReference type="ChEBI" id="CHEBI:30616"/>
    </ligand>
</feature>
<feature type="binding site" evidence="1">
    <location>
        <position position="542"/>
    </location>
    <ligand>
        <name>Mg(2+)</name>
        <dbReference type="ChEBI" id="CHEBI:18420"/>
        <label>2</label>
    </ligand>
</feature>
<name>UBA1_CANAW</name>
<comment type="function">
    <text evidence="1">E1 ubiquitin-activating enzyme that catalyzes the first step in ubiquitin conjugation to mark cellular proteins for degradation through the ubiquitin-proteasome system (By similarity). Activates ubiquitin by first adenylating its C-terminal glycine residue with ATP, and thereafter linking this residue to the side chain of a cysteine residue in E1, yielding a ubiquitin-E1 thioester and free AMP (By similarity).</text>
</comment>
<comment type="catalytic activity">
    <reaction evidence="2">
        <text>ATP + ubiquitin + [E1 ubiquitin-activating enzyme]-L-cysteine = AMP + diphosphate + S-ubiquitinyl-[E1 ubiquitin-activating enzyme]-L-cysteine.</text>
        <dbReference type="EC" id="6.2.1.45"/>
    </reaction>
</comment>
<comment type="pathway">
    <text evidence="2">Protein modification; protein ubiquitination.</text>
</comment>
<comment type="subunit">
    <text evidence="1">Monomer.</text>
</comment>
<comment type="subcellular location">
    <subcellularLocation>
        <location>Cytoplasm</location>
    </subcellularLocation>
    <subcellularLocation>
        <location>Nucleus</location>
    </subcellularLocation>
</comment>
<comment type="miscellaneous">
    <text evidence="1">There are two active sites within the E1 molecule, allowing it to accommodate two ubiquitin moieties at a time, with a new ubiquitin forming an adenylate intermediate as the previous one is transferred to the thiol site.</text>
</comment>
<comment type="similarity">
    <text evidence="4">Belongs to the ubiquitin-activating E1 family.</text>
</comment>
<protein>
    <recommendedName>
        <fullName>Ubiquitin-activating enzyme E1 1</fullName>
        <ecNumber evidence="2">6.2.1.45</ecNumber>
    </recommendedName>
</protein>
<organism>
    <name type="scientific">Candida albicans (strain WO-1)</name>
    <name type="common">Yeast</name>
    <dbReference type="NCBI Taxonomy" id="294748"/>
    <lineage>
        <taxon>Eukaryota</taxon>
        <taxon>Fungi</taxon>
        <taxon>Dikarya</taxon>
        <taxon>Ascomycota</taxon>
        <taxon>Saccharomycotina</taxon>
        <taxon>Pichiomycetes</taxon>
        <taxon>Debaryomycetaceae</taxon>
        <taxon>Candida/Lodderomyces clade</taxon>
        <taxon>Candida</taxon>
    </lineage>
</organism>
<reference key="1">
    <citation type="journal article" date="2009" name="Nature">
        <title>Evolution of pathogenicity and sexual reproduction in eight Candida genomes.</title>
        <authorList>
            <person name="Butler G."/>
            <person name="Rasmussen M.D."/>
            <person name="Lin M.F."/>
            <person name="Santos M.A.S."/>
            <person name="Sakthikumar S."/>
            <person name="Munro C.A."/>
            <person name="Rheinbay E."/>
            <person name="Grabherr M."/>
            <person name="Forche A."/>
            <person name="Reedy J.L."/>
            <person name="Agrafioti I."/>
            <person name="Arnaud M.B."/>
            <person name="Bates S."/>
            <person name="Brown A.J.P."/>
            <person name="Brunke S."/>
            <person name="Costanzo M.C."/>
            <person name="Fitzpatrick D.A."/>
            <person name="de Groot P.W.J."/>
            <person name="Harris D."/>
            <person name="Hoyer L.L."/>
            <person name="Hube B."/>
            <person name="Klis F.M."/>
            <person name="Kodira C."/>
            <person name="Lennard N."/>
            <person name="Logue M.E."/>
            <person name="Martin R."/>
            <person name="Neiman A.M."/>
            <person name="Nikolaou E."/>
            <person name="Quail M.A."/>
            <person name="Quinn J."/>
            <person name="Santos M.C."/>
            <person name="Schmitzberger F.F."/>
            <person name="Sherlock G."/>
            <person name="Shah P."/>
            <person name="Silverstein K.A.T."/>
            <person name="Skrzypek M.S."/>
            <person name="Soll D."/>
            <person name="Staggs R."/>
            <person name="Stansfield I."/>
            <person name="Stumpf M.P.H."/>
            <person name="Sudbery P.E."/>
            <person name="Srikantha T."/>
            <person name="Zeng Q."/>
            <person name="Berman J."/>
            <person name="Berriman M."/>
            <person name="Heitman J."/>
            <person name="Gow N.A.R."/>
            <person name="Lorenz M.C."/>
            <person name="Birren B.W."/>
            <person name="Kellis M."/>
            <person name="Cuomo C.A."/>
        </authorList>
    </citation>
    <scope>NUCLEOTIDE SEQUENCE [LARGE SCALE GENOMIC DNA]</scope>
    <source>
        <strain>WO-1</strain>
    </source>
</reference>
<reference key="2">
    <citation type="journal article" date="1998" name="Mol. Microbiol.">
        <title>A Ste6p/P-glycoprotein homologue from the asexual yeast Candida albicans transports the a-factor mating pheromone in Saccharomyces cerevisiae.</title>
        <authorList>
            <person name="Raymond M."/>
            <person name="Dignard D."/>
            <person name="Alarco A.-M."/>
            <person name="Mainville N."/>
            <person name="Magee B.B."/>
            <person name="Thomas D.Y."/>
        </authorList>
    </citation>
    <scope>NUCLEOTIDE SEQUENCE [GENOMIC DNA] OF 817-1021</scope>
    <source>
        <strain>WO-1</strain>
    </source>
</reference>
<evidence type="ECO:0000250" key="1">
    <source>
        <dbReference type="UniProtKB" id="O94609"/>
    </source>
</evidence>
<evidence type="ECO:0000250" key="2">
    <source>
        <dbReference type="UniProtKB" id="P22515"/>
    </source>
</evidence>
<evidence type="ECO:0000255" key="3">
    <source>
        <dbReference type="PROSITE-ProRule" id="PRU10132"/>
    </source>
</evidence>
<evidence type="ECO:0000305" key="4"/>
<proteinExistence type="inferred from homology"/>
<sequence length="1021" mass="114271">MSDNMQIDSPSPQEIDEGLYSRQLYVLGKEAMLKMQNANVLIIGLNGLGIEIAKNIALAGVKSLSLYDPKPVSITDLSTQFFLSESEIGQPRDVASREKLAELNSYVPINVVDNIDEETLLKFKCIVSTNISLEEQVKINNITHANNIGYINADIKGLFGQIFVDFGDKFTVIDQTGEEPLSGIVSDIEKNGTVTMLDDNRHGLQDGDYVKFAEVEGMPKLNEGNPHKVEVLGPYAFKIKIDESYGEYVKGGLYTQVKVPKDLSFEPLTKQLAAPEYLISDFAKFDKPAQLHLGFQALHAFQTKHQGELPAPYNEQDATEAFRYAEELATQNPSILGEDKLDEKYLKELFYQARGDIPGVVAFYGGLIAQEVLKNCSSKFTPIKQWLYFDSLESLPSETEYPRNEENNKPIGSRYDGQIAVFGKAFQEKIANLKVFLVGSGAIGCEMLKNWAMMGLGSGPEGKIFITDNDSIEKSNLNRQFLFRPKDVGKNKSDVAALAVQQMNPDLKGKIDSKLDKVGPETEDIFDDKFWTQLNIVVNALDNVEARTYVDRRCVFYKKPLLESGTLGTKGNTQVVIPNLTESYSSSQDPPEKSIPLCTLRSFPNKIDHTIAWAKSLFQGYFAESPESVNLYLSQPNYVEQTLKQNPDIKGTLENISKYLNNRPYTFEDCIKWARQEFETKFNHDIQQLLYNFPPDAKTSTGAPFWSGPKRAPKPLEFDINNKDHLDFIIGGANLLAFIYGLKEPNATVDDFKKVLEQVIIEPFQPKSGVEIAATDAEAEEQANNLSGSIDDEQIRKIAASLPEPSTLAGYRLTPIEFEKDDDTNHHIEFITAASNCRALNYGIEIADAHKTKFIAGKIIPAIATTTALVTGLVCLELYKVVDGKDDIEQYKNGFINLALPFIGFSEPIKSPEGKYNNKKFDQIWDRFELNGDITLQELLDHFEKEEGLTISMLSYGVSLLYASFFPPKKVKDRLGLKLTSLIKEVSKKEVPSHVKNLIFEICCDDEEGEDVEVPYICVKL</sequence>
<gene>
    <name type="primary">UBA1</name>
    <name type="ORF">CAWG_02960</name>
</gene>
<keyword id="KW-0067">ATP-binding</keyword>
<keyword id="KW-0963">Cytoplasm</keyword>
<keyword id="KW-0436">Ligase</keyword>
<keyword id="KW-0460">Magnesium</keyword>
<keyword id="KW-0479">Metal-binding</keyword>
<keyword id="KW-0547">Nucleotide-binding</keyword>
<keyword id="KW-0539">Nucleus</keyword>
<keyword id="KW-0833">Ubl conjugation pathway</keyword>
<accession>P52495</accession>
<accession>C4YP25</accession>